<accession>A0PXN0</accession>
<sequence length="556" mass="60126">MKSDIEIAQSANMKKIADIAKELGLGEDDIELYGKYKCKISLDVLKNKHNEADGKLILVTAINPTPAGEGKSTITVGLGQALCKLHKKAVIALREPSLGPVFGIKGGAAGGGYSQVVPMEDINLHFTGDMHAITSANNLLAAAIDNHIHQGNTLKIDSRRILFKRVMDMNDRALRHIVVGMGGKVNGFLREDGFTITVASEIMAILCLSNSLMDLKERFGNILVAYNLDGEPIYCKDLNVHGAMAMLMKDAIKPNLVQTLENTPAIIHGGPFANIAHGCNSILATKMAMKLGDYAITEAGFGADLGAEKFLDIKCRYGNLKPDCIVVVATIRALKHHGGVSKDELSTPDIEALSKGVSNLQKQIENMKKYGVPVVVAINKFITDSDEEVEFIKEFCDKQGVEVALAEVWEKGGEGGIALAEKVINVLDTQKSNFKCLYDEKLSIKEKMDIIAREIYGASGVDYDKSAEKDIKDIEKLGLDKLPICVAKTQYSLSDNPSLLGKPEDFRVNVREVKVSNGAGFIVVLTGNIMTMPGLPKVPAANKMDILEGGTIQGLF</sequence>
<dbReference type="EC" id="6.3.4.3" evidence="1"/>
<dbReference type="EMBL" id="CP000382">
    <property type="protein sequence ID" value="ABK61005.1"/>
    <property type="molecule type" value="Genomic_DNA"/>
</dbReference>
<dbReference type="RefSeq" id="WP_011721153.1">
    <property type="nucleotide sequence ID" value="NC_008593.1"/>
</dbReference>
<dbReference type="SMR" id="A0PXN0"/>
<dbReference type="STRING" id="386415.NT01CX_1042"/>
<dbReference type="KEGG" id="cno:NT01CX_1042"/>
<dbReference type="PATRIC" id="fig|386415.7.peg.158"/>
<dbReference type="eggNOG" id="COG2759">
    <property type="taxonomic scope" value="Bacteria"/>
</dbReference>
<dbReference type="HOGENOM" id="CLU_003601_3_3_9"/>
<dbReference type="UniPathway" id="UPA00193"/>
<dbReference type="Proteomes" id="UP000008220">
    <property type="component" value="Chromosome"/>
</dbReference>
<dbReference type="GO" id="GO:0005524">
    <property type="term" value="F:ATP binding"/>
    <property type="evidence" value="ECO:0007669"/>
    <property type="project" value="UniProtKB-UniRule"/>
</dbReference>
<dbReference type="GO" id="GO:0004329">
    <property type="term" value="F:formate-tetrahydrofolate ligase activity"/>
    <property type="evidence" value="ECO:0007669"/>
    <property type="project" value="UniProtKB-UniRule"/>
</dbReference>
<dbReference type="GO" id="GO:0035999">
    <property type="term" value="P:tetrahydrofolate interconversion"/>
    <property type="evidence" value="ECO:0007669"/>
    <property type="project" value="UniProtKB-UniRule"/>
</dbReference>
<dbReference type="CDD" id="cd00477">
    <property type="entry name" value="FTHFS"/>
    <property type="match status" value="1"/>
</dbReference>
<dbReference type="FunFam" id="3.30.1510.10:FF:000001">
    <property type="entry name" value="Formate--tetrahydrofolate ligase"/>
    <property type="match status" value="1"/>
</dbReference>
<dbReference type="FunFam" id="3.10.410.10:FF:000001">
    <property type="entry name" value="Putative formate--tetrahydrofolate ligase"/>
    <property type="match status" value="1"/>
</dbReference>
<dbReference type="Gene3D" id="3.30.1510.10">
    <property type="entry name" value="Domain 2, N(10)-formyltetrahydrofolate synthetase"/>
    <property type="match status" value="1"/>
</dbReference>
<dbReference type="Gene3D" id="3.10.410.10">
    <property type="entry name" value="Formyltetrahydrofolate synthetase, domain 3"/>
    <property type="match status" value="1"/>
</dbReference>
<dbReference type="Gene3D" id="3.40.50.300">
    <property type="entry name" value="P-loop containing nucleotide triphosphate hydrolases"/>
    <property type="match status" value="1"/>
</dbReference>
<dbReference type="HAMAP" id="MF_01543">
    <property type="entry name" value="FTHFS"/>
    <property type="match status" value="1"/>
</dbReference>
<dbReference type="InterPro" id="IPR000559">
    <property type="entry name" value="Formate_THF_ligase"/>
</dbReference>
<dbReference type="InterPro" id="IPR020628">
    <property type="entry name" value="Formate_THF_ligase_CS"/>
</dbReference>
<dbReference type="InterPro" id="IPR027417">
    <property type="entry name" value="P-loop_NTPase"/>
</dbReference>
<dbReference type="NCBIfam" id="NF010030">
    <property type="entry name" value="PRK13505.1"/>
    <property type="match status" value="1"/>
</dbReference>
<dbReference type="Pfam" id="PF01268">
    <property type="entry name" value="FTHFS"/>
    <property type="match status" value="1"/>
</dbReference>
<dbReference type="SUPFAM" id="SSF52540">
    <property type="entry name" value="P-loop containing nucleoside triphosphate hydrolases"/>
    <property type="match status" value="1"/>
</dbReference>
<dbReference type="PROSITE" id="PS00721">
    <property type="entry name" value="FTHFS_1"/>
    <property type="match status" value="1"/>
</dbReference>
<dbReference type="PROSITE" id="PS00722">
    <property type="entry name" value="FTHFS_2"/>
    <property type="match status" value="1"/>
</dbReference>
<feature type="chain" id="PRO_0000300519" description="Formate--tetrahydrofolate ligase">
    <location>
        <begin position="1"/>
        <end position="556"/>
    </location>
</feature>
<feature type="binding site" evidence="1">
    <location>
        <begin position="65"/>
        <end position="72"/>
    </location>
    <ligand>
        <name>ATP</name>
        <dbReference type="ChEBI" id="CHEBI:30616"/>
    </ligand>
</feature>
<comment type="catalytic activity">
    <reaction evidence="1">
        <text>(6S)-5,6,7,8-tetrahydrofolate + formate + ATP = (6R)-10-formyltetrahydrofolate + ADP + phosphate</text>
        <dbReference type="Rhea" id="RHEA:20221"/>
        <dbReference type="ChEBI" id="CHEBI:15740"/>
        <dbReference type="ChEBI" id="CHEBI:30616"/>
        <dbReference type="ChEBI" id="CHEBI:43474"/>
        <dbReference type="ChEBI" id="CHEBI:57453"/>
        <dbReference type="ChEBI" id="CHEBI:195366"/>
        <dbReference type="ChEBI" id="CHEBI:456216"/>
        <dbReference type="EC" id="6.3.4.3"/>
    </reaction>
</comment>
<comment type="pathway">
    <text evidence="1">One-carbon metabolism; tetrahydrofolate interconversion.</text>
</comment>
<comment type="similarity">
    <text evidence="1">Belongs to the formate--tetrahydrofolate ligase family.</text>
</comment>
<evidence type="ECO:0000255" key="1">
    <source>
        <dbReference type="HAMAP-Rule" id="MF_01543"/>
    </source>
</evidence>
<reference key="1">
    <citation type="journal article" date="2006" name="Nat. Biotechnol.">
        <title>The genome and transcriptomes of the anti-tumor agent Clostridium novyi-NT.</title>
        <authorList>
            <person name="Bettegowda C."/>
            <person name="Huang X."/>
            <person name="Lin J."/>
            <person name="Cheong I."/>
            <person name="Kohli M."/>
            <person name="Szabo S.A."/>
            <person name="Zhang X."/>
            <person name="Diaz L.A. Jr."/>
            <person name="Velculescu V.E."/>
            <person name="Parmigiani G."/>
            <person name="Kinzler K.W."/>
            <person name="Vogelstein B."/>
            <person name="Zhou S."/>
        </authorList>
    </citation>
    <scope>NUCLEOTIDE SEQUENCE [LARGE SCALE GENOMIC DNA]</scope>
    <source>
        <strain>NT</strain>
    </source>
</reference>
<name>FTHS_CLONN</name>
<organism>
    <name type="scientific">Clostridium novyi (strain NT)</name>
    <dbReference type="NCBI Taxonomy" id="386415"/>
    <lineage>
        <taxon>Bacteria</taxon>
        <taxon>Bacillati</taxon>
        <taxon>Bacillota</taxon>
        <taxon>Clostridia</taxon>
        <taxon>Eubacteriales</taxon>
        <taxon>Clostridiaceae</taxon>
        <taxon>Clostridium</taxon>
    </lineage>
</organism>
<gene>
    <name evidence="1" type="primary">fhs</name>
    <name type="ordered locus">NT01CX_1042</name>
</gene>
<keyword id="KW-0067">ATP-binding</keyword>
<keyword id="KW-0436">Ligase</keyword>
<keyword id="KW-0547">Nucleotide-binding</keyword>
<keyword id="KW-0554">One-carbon metabolism</keyword>
<keyword id="KW-1185">Reference proteome</keyword>
<protein>
    <recommendedName>
        <fullName evidence="1">Formate--tetrahydrofolate ligase</fullName>
        <ecNumber evidence="1">6.3.4.3</ecNumber>
    </recommendedName>
    <alternativeName>
        <fullName evidence="1">Formyltetrahydrofolate synthetase</fullName>
        <shortName evidence="1">FHS</shortName>
        <shortName evidence="1">FTHFS</shortName>
    </alternativeName>
</protein>
<proteinExistence type="inferred from homology"/>